<evidence type="ECO:0000250" key="1">
    <source>
        <dbReference type="UniProtKB" id="P76318"/>
    </source>
</evidence>
<evidence type="ECO:0000250" key="2">
    <source>
        <dbReference type="UniProtKB" id="Q8R1M0"/>
    </source>
</evidence>
<evidence type="ECO:0000250" key="3">
    <source>
        <dbReference type="UniProtKB" id="Q96FZ2"/>
    </source>
</evidence>
<evidence type="ECO:0000256" key="4">
    <source>
        <dbReference type="SAM" id="MobiDB-lite"/>
    </source>
</evidence>
<evidence type="ECO:0000305" key="5"/>
<comment type="function">
    <text evidence="2 3">Sensor of abasic sites in single-stranded DNA (ssDNA) required to preserve genome integrity by promoting error-free repair of abasic sites. Acts as an enzyme that recognizes and binds abasic sites in ssDNA at replication forks and chemically modifies the lesion by forming a covalent cross-link with DNA: forms a stable thiazolidine linkage between a ring-opened abasic site and the alpha-amino and sulfhydryl substituents of its N-terminal catalytic cysteine residue. Promotes error-free repair by protecting abasic sites from translesion synthesis (TLS) polymerases and endonucleases that are error-prone and would generate mutations and double-strand breaks. The HMCES DNA-protein cross-link is then either reversed or degraded. HMCES is able to catalyze the reversal of its thiazolidine cross-link and cycle between a cross-link and a non-cross-linked state depending on DNA context: mediates self-reversal of the thiazolidine cross-link in double stranded DNA, allowing APEX1 to initiate downstream repair of abasic sites. The HMCES DNA-protein cross-link can also be degraded by the SPRTN metalloprotease following unfolding by the BRIP1/FANCJ helicase. Has preference for ssDNA, but can also accommodate double-stranded DNA with 3' or 5' overhang (dsDNA), and dsDNA-ssDNA 3' junction. Plays a protective role during somatic hypermutation of immunoglobulin genes in B-cells: acts via its ability to form covalent cross-links with abasic sites, thereby limiting the accumulation of deletions in somatic hypermutation target regions (By similarity). Also involved in class switch recombination (CSR) in B-cells independently of the formation of a DNA-protein cross-link: acts by binding and protecting ssDNA overhangs to promote DNA double-strand break repair through the microhomology-mediated alternative-end-joining (Alt-EJ) pathway. Acts as a protease: mediates autocatalytic processing of its N-terminal methionine in order to expose the catalytic cysteine (By similarity).</text>
</comment>
<comment type="activity regulation">
    <text evidence="3">Formation and reversal of DNA-protein cross-link depends on DNA context. Catalyzes formation of the thiazolidine linkage in presence of abasic sites in single-stranded DNA. Mediates the reversal of the thiazolidine cross-link in presence of double stranded DNA.</text>
</comment>
<comment type="subunit">
    <text evidence="3">Interacts (via PIP-box motif) with PCNA.</text>
</comment>
<comment type="subcellular location">
    <subcellularLocation>
        <location evidence="3">Chromosome</location>
    </subcellularLocation>
    <text evidence="3">Recruited to chromatin following DNA damage. Localizes to replication forks.</text>
</comment>
<comment type="domain">
    <text evidence="1 3">The N-terminal catalytic Cys-2 residue forms a thiazolidine linkage to a ring-opened DNA abasic site. Glu-127 catalyzes reversal of the thiazolidine linkage; self-reversal is favoured by duplex DNA formation (By similarity). Glu-127 is also involved in sensing abasic sites in single-stranded DNA (ssDNA). His-210 stabilizes the abasic sites by forming a hydrogen bond with the O4' hydroxyl group (By similarity).</text>
</comment>
<comment type="PTM">
    <text evidence="3">Ubiquitinated; the covalent HMCES DNA-protein cross-link is ubiquitinated, leading to its degradation by the proteasome.</text>
</comment>
<comment type="similarity">
    <text evidence="5">Belongs to the SOS response-associated peptidase family.</text>
</comment>
<name>HMCES_PONAB</name>
<keyword id="KW-0068">Autocatalytic cleavage</keyword>
<keyword id="KW-0158">Chromosome</keyword>
<keyword id="KW-0190">Covalent protein-DNA linkage</keyword>
<keyword id="KW-0227">DNA damage</keyword>
<keyword id="KW-0238">DNA-binding</keyword>
<keyword id="KW-0378">Hydrolase</keyword>
<keyword id="KW-1017">Isopeptide bond</keyword>
<keyword id="KW-0456">Lyase</keyword>
<keyword id="KW-0597">Phosphoprotein</keyword>
<keyword id="KW-0645">Protease</keyword>
<keyword id="KW-1185">Reference proteome</keyword>
<keyword id="KW-0832">Ubl conjugation</keyword>
<feature type="initiator methionine" description="Removed" evidence="2">
    <location>
        <position position="1"/>
    </location>
</feature>
<feature type="chain" id="PRO_0000164396" description="Abasic site processing protein HMCES">
    <location>
        <begin position="2"/>
        <end position="354"/>
    </location>
</feature>
<feature type="region of interest" description="Disordered" evidence="4">
    <location>
        <begin position="292"/>
        <end position="354"/>
    </location>
</feature>
<feature type="short sequence motif" description="PIP-box" evidence="3">
    <location>
        <begin position="332"/>
        <end position="338"/>
    </location>
</feature>
<feature type="compositionally biased region" description="Basic and acidic residues" evidence="4">
    <location>
        <begin position="296"/>
        <end position="309"/>
    </location>
</feature>
<feature type="compositionally biased region" description="Basic and acidic residues" evidence="4">
    <location>
        <begin position="337"/>
        <end position="348"/>
    </location>
</feature>
<feature type="active site" description="Nucleophile" evidence="3">
    <location>
        <position position="2"/>
    </location>
</feature>
<feature type="active site" evidence="3">
    <location>
        <position position="127"/>
    </location>
</feature>
<feature type="site" description="Required for sensing abasic sites" evidence="1">
    <location>
        <position position="127"/>
    </location>
</feature>
<feature type="site" description="Required to stabilize abasic sites" evidence="1">
    <location>
        <position position="210"/>
    </location>
</feature>
<feature type="modified residue" description="Thiazolidine linkage to a ring-opened DNA abasic site" evidence="3">
    <location>
        <position position="2"/>
    </location>
</feature>
<feature type="modified residue" description="Phosphoserine" evidence="3">
    <location>
        <position position="160"/>
    </location>
</feature>
<feature type="modified residue" description="Phosphoserine" evidence="3">
    <location>
        <position position="295"/>
    </location>
</feature>
<feature type="modified residue" description="Phosphoserine" evidence="3">
    <location>
        <position position="322"/>
    </location>
</feature>
<feature type="cross-link" description="Glycyl lysine isopeptide (Lys-Gly) (interchain with G-Cter in SUMO2)" evidence="3">
    <location>
        <position position="148"/>
    </location>
</feature>
<feature type="cross-link" description="Glycyl lysine isopeptide (Lys-Gly) (interchain with G-Cter in SUMO2)" evidence="3">
    <location>
        <position position="151"/>
    </location>
</feature>
<feature type="cross-link" description="Glycyl lysine isopeptide (Lys-Gly) (interchain with G-Cter in SUMO2)" evidence="3">
    <location>
        <position position="276"/>
    </location>
</feature>
<feature type="cross-link" description="Glycyl lysine isopeptide (Lys-Gly) (interchain with G-Cter in SUMO2)" evidence="3">
    <location>
        <position position="306"/>
    </location>
</feature>
<feature type="cross-link" description="Glycyl lysine isopeptide (Lys-Gly) (interchain with G-Cter in SUMO2)" evidence="3">
    <location>
        <position position="339"/>
    </location>
</feature>
<feature type="cross-link" description="Glycyl lysine isopeptide (Lys-Gly) (interchain with G-Cter in SUMO2)" evidence="3">
    <location>
        <position position="342"/>
    </location>
</feature>
<accession>Q5NVR0</accession>
<sequence length="354" mass="40513">MCGRTSCHLPRDVLTRACAYQDRRGQQRLPEWRDPDKYCPSYNKSPQSNSPVLLSRLHFVKDADSSERIIAPMRWGLVPSWFKESDPSKLQFNTTNCRNDTIMEKRSFKVPLGKGRRCVVLADGFYEWQRCQGTNQRQPYFIYFPQIKTEKSGSIGAADSPENWGKVWDNWRLLTMAGIFDCWEPPEGGDVLYSYTIITVDSCKGLSDIHHRMPAILDGEEAVSKWLDFGKVSTQEALKLIHPTENITFHAVSSVVNNSRNNTPECLAPVDLVVRKELKASGSSQRMLQWLATKSPKKEDSKTPQKEESDVPQWSSQFLQKSPLPTKRGTAGLLEQWLKREKEEEPVAKRPYSQ</sequence>
<reference key="1">
    <citation type="submission" date="2004-11" db="EMBL/GenBank/DDBJ databases">
        <authorList>
            <consortium name="The German cDNA consortium"/>
        </authorList>
    </citation>
    <scope>NUCLEOTIDE SEQUENCE [LARGE SCALE MRNA]</scope>
    <source>
        <tissue>Brain cortex</tissue>
    </source>
</reference>
<dbReference type="EC" id="4.-.-.-" evidence="3"/>
<dbReference type="EC" id="3.4.-.-" evidence="2"/>
<dbReference type="EMBL" id="CR925946">
    <property type="protein sequence ID" value="CAI29603.1"/>
    <property type="molecule type" value="mRNA"/>
</dbReference>
<dbReference type="RefSeq" id="NP_001127070.1">
    <property type="nucleotide sequence ID" value="NM_001133598.1"/>
</dbReference>
<dbReference type="SMR" id="Q5NVR0"/>
<dbReference type="FunCoup" id="Q5NVR0">
    <property type="interactions" value="512"/>
</dbReference>
<dbReference type="GeneID" id="100174100"/>
<dbReference type="KEGG" id="pon:100174100"/>
<dbReference type="CTD" id="56941"/>
<dbReference type="eggNOG" id="KOG2618">
    <property type="taxonomic scope" value="Eukaryota"/>
</dbReference>
<dbReference type="InParanoid" id="Q5NVR0"/>
<dbReference type="OrthoDB" id="2111841at2759"/>
<dbReference type="Proteomes" id="UP000001595">
    <property type="component" value="Unplaced"/>
</dbReference>
<dbReference type="GO" id="GO:0005657">
    <property type="term" value="C:replication fork"/>
    <property type="evidence" value="ECO:0000250"/>
    <property type="project" value="UniProtKB"/>
</dbReference>
<dbReference type="GO" id="GO:0008233">
    <property type="term" value="F:peptidase activity"/>
    <property type="evidence" value="ECO:0007669"/>
    <property type="project" value="UniProtKB-KW"/>
</dbReference>
<dbReference type="GO" id="GO:0160129">
    <property type="term" value="F:protein-DNA covalent cross-linking activity"/>
    <property type="evidence" value="ECO:0000250"/>
    <property type="project" value="UniProtKB"/>
</dbReference>
<dbReference type="GO" id="GO:0003697">
    <property type="term" value="F:single-stranded DNA binding"/>
    <property type="evidence" value="ECO:0000250"/>
    <property type="project" value="UniProtKB"/>
</dbReference>
<dbReference type="GO" id="GO:0006974">
    <property type="term" value="P:DNA damage response"/>
    <property type="evidence" value="ECO:0000250"/>
    <property type="project" value="UniProtKB"/>
</dbReference>
<dbReference type="GO" id="GO:0036297">
    <property type="term" value="P:interstrand cross-link repair"/>
    <property type="evidence" value="ECO:0000250"/>
    <property type="project" value="UniProtKB"/>
</dbReference>
<dbReference type="GO" id="GO:0045830">
    <property type="term" value="P:positive regulation of isotype switching"/>
    <property type="evidence" value="ECO:0000250"/>
    <property type="project" value="UniProtKB"/>
</dbReference>
<dbReference type="GO" id="GO:0106300">
    <property type="term" value="P:protein-DNA covalent cross-linking repair"/>
    <property type="evidence" value="ECO:0000250"/>
    <property type="project" value="UniProtKB"/>
</dbReference>
<dbReference type="GO" id="GO:0006508">
    <property type="term" value="P:proteolysis"/>
    <property type="evidence" value="ECO:0007669"/>
    <property type="project" value="UniProtKB-KW"/>
</dbReference>
<dbReference type="GO" id="GO:0016446">
    <property type="term" value="P:somatic hypermutation of immunoglobulin genes"/>
    <property type="evidence" value="ECO:0000250"/>
    <property type="project" value="UniProtKB"/>
</dbReference>
<dbReference type="FunFam" id="3.90.1680.10:FF:000001">
    <property type="entry name" value="Abasic site processing protein HMCES"/>
    <property type="match status" value="1"/>
</dbReference>
<dbReference type="Gene3D" id="3.90.1680.10">
    <property type="entry name" value="SOS response associated peptidase-like"/>
    <property type="match status" value="1"/>
</dbReference>
<dbReference type="InterPro" id="IPR003738">
    <property type="entry name" value="SRAP"/>
</dbReference>
<dbReference type="InterPro" id="IPR036590">
    <property type="entry name" value="SRAP-like"/>
</dbReference>
<dbReference type="PANTHER" id="PTHR13604:SF0">
    <property type="entry name" value="ABASIC SITE PROCESSING PROTEIN HMCES"/>
    <property type="match status" value="1"/>
</dbReference>
<dbReference type="PANTHER" id="PTHR13604">
    <property type="entry name" value="DC12-RELATED"/>
    <property type="match status" value="1"/>
</dbReference>
<dbReference type="Pfam" id="PF02586">
    <property type="entry name" value="SRAP"/>
    <property type="match status" value="1"/>
</dbReference>
<dbReference type="SUPFAM" id="SSF143081">
    <property type="entry name" value="BB1717-like"/>
    <property type="match status" value="1"/>
</dbReference>
<organism>
    <name type="scientific">Pongo abelii</name>
    <name type="common">Sumatran orangutan</name>
    <name type="synonym">Pongo pygmaeus abelii</name>
    <dbReference type="NCBI Taxonomy" id="9601"/>
    <lineage>
        <taxon>Eukaryota</taxon>
        <taxon>Metazoa</taxon>
        <taxon>Chordata</taxon>
        <taxon>Craniata</taxon>
        <taxon>Vertebrata</taxon>
        <taxon>Euteleostomi</taxon>
        <taxon>Mammalia</taxon>
        <taxon>Eutheria</taxon>
        <taxon>Euarchontoglires</taxon>
        <taxon>Primates</taxon>
        <taxon>Haplorrhini</taxon>
        <taxon>Catarrhini</taxon>
        <taxon>Hominidae</taxon>
        <taxon>Pongo</taxon>
    </lineage>
</organism>
<proteinExistence type="evidence at transcript level"/>
<gene>
    <name evidence="3" type="primary">HMCES</name>
    <name evidence="3" type="synonym">SRAPD1</name>
</gene>
<protein>
    <recommendedName>
        <fullName evidence="5">Abasic site processing protein HMCES</fullName>
        <ecNumber evidence="3">4.-.-.-</ecNumber>
    </recommendedName>
    <alternativeName>
        <fullName>Embryonic stem cell-specific 5-hydroxymethylcytosine-binding protein</fullName>
        <shortName evidence="3">ES cell-specific 5hmC-binding protein</shortName>
    </alternativeName>
    <alternativeName>
        <fullName evidence="2">Peptidase HMCES</fullName>
        <ecNumber evidence="2">3.4.-.-</ecNumber>
    </alternativeName>
    <alternativeName>
        <fullName evidence="3">SRAP domain-containing protein 1</fullName>
    </alternativeName>
</protein>